<dbReference type="EMBL" id="D26185">
    <property type="protein sequence ID" value="BAA05222.1"/>
    <property type="molecule type" value="Genomic_DNA"/>
</dbReference>
<dbReference type="EMBL" id="AL009126">
    <property type="protein sequence ID" value="CAB16129.1"/>
    <property type="molecule type" value="Genomic_DNA"/>
</dbReference>
<dbReference type="PIR" id="S66016">
    <property type="entry name" value="S66016"/>
</dbReference>
<dbReference type="RefSeq" id="NP_391972.1">
    <property type="nucleotide sequence ID" value="NC_000964.3"/>
</dbReference>
<dbReference type="RefSeq" id="WP_003242727.1">
    <property type="nucleotide sequence ID" value="NZ_OZ025638.1"/>
</dbReference>
<dbReference type="SMR" id="P37518"/>
<dbReference type="FunCoup" id="P37518">
    <property type="interactions" value="655"/>
</dbReference>
<dbReference type="IntAct" id="P37518">
    <property type="interactions" value="1"/>
</dbReference>
<dbReference type="MINT" id="P37518"/>
<dbReference type="STRING" id="224308.BSU40920"/>
<dbReference type="jPOST" id="P37518"/>
<dbReference type="PaxDb" id="224308-BSU40920"/>
<dbReference type="EnsemblBacteria" id="CAB16129">
    <property type="protein sequence ID" value="CAB16129"/>
    <property type="gene ID" value="BSU_40920"/>
</dbReference>
<dbReference type="GeneID" id="937916"/>
<dbReference type="KEGG" id="bsu:BSU40920"/>
<dbReference type="PATRIC" id="fig|224308.179.peg.4433"/>
<dbReference type="eggNOG" id="COG0012">
    <property type="taxonomic scope" value="Bacteria"/>
</dbReference>
<dbReference type="InParanoid" id="P37518"/>
<dbReference type="OrthoDB" id="9807318at2"/>
<dbReference type="PhylomeDB" id="P37518"/>
<dbReference type="BioCyc" id="BSUB:BSU40920-MONOMER"/>
<dbReference type="Proteomes" id="UP000001570">
    <property type="component" value="Chromosome"/>
</dbReference>
<dbReference type="GO" id="GO:0005737">
    <property type="term" value="C:cytoplasm"/>
    <property type="evidence" value="ECO:0000318"/>
    <property type="project" value="GO_Central"/>
</dbReference>
<dbReference type="GO" id="GO:0005524">
    <property type="term" value="F:ATP binding"/>
    <property type="evidence" value="ECO:0007669"/>
    <property type="project" value="UniProtKB-UniRule"/>
</dbReference>
<dbReference type="GO" id="GO:0016887">
    <property type="term" value="F:ATP hydrolysis activity"/>
    <property type="evidence" value="ECO:0000318"/>
    <property type="project" value="GO_Central"/>
</dbReference>
<dbReference type="GO" id="GO:0005525">
    <property type="term" value="F:GTP binding"/>
    <property type="evidence" value="ECO:0007669"/>
    <property type="project" value="InterPro"/>
</dbReference>
<dbReference type="GO" id="GO:0046872">
    <property type="term" value="F:metal ion binding"/>
    <property type="evidence" value="ECO:0007669"/>
    <property type="project" value="UniProtKB-KW"/>
</dbReference>
<dbReference type="GO" id="GO:0043023">
    <property type="term" value="F:ribosomal large subunit binding"/>
    <property type="evidence" value="ECO:0007669"/>
    <property type="project" value="UniProtKB-UniRule"/>
</dbReference>
<dbReference type="CDD" id="cd04867">
    <property type="entry name" value="TGS_YchF_OLA1"/>
    <property type="match status" value="1"/>
</dbReference>
<dbReference type="CDD" id="cd01900">
    <property type="entry name" value="YchF"/>
    <property type="match status" value="1"/>
</dbReference>
<dbReference type="FunFam" id="1.10.150.300:FF:000004">
    <property type="entry name" value="Ribosome-binding ATPase YchF"/>
    <property type="match status" value="1"/>
</dbReference>
<dbReference type="FunFam" id="3.10.20.30:FF:000001">
    <property type="entry name" value="Ribosome-binding ATPase YchF"/>
    <property type="match status" value="1"/>
</dbReference>
<dbReference type="Gene3D" id="3.10.20.30">
    <property type="match status" value="1"/>
</dbReference>
<dbReference type="Gene3D" id="3.40.50.300">
    <property type="entry name" value="P-loop containing nucleotide triphosphate hydrolases"/>
    <property type="match status" value="1"/>
</dbReference>
<dbReference type="Gene3D" id="1.10.150.300">
    <property type="entry name" value="TGS-like domain"/>
    <property type="match status" value="1"/>
</dbReference>
<dbReference type="HAMAP" id="MF_00944">
    <property type="entry name" value="YchF_OLA1_ATPase"/>
    <property type="match status" value="1"/>
</dbReference>
<dbReference type="InterPro" id="IPR004396">
    <property type="entry name" value="ATPase_YchF/OLA1"/>
</dbReference>
<dbReference type="InterPro" id="IPR012675">
    <property type="entry name" value="Beta-grasp_dom_sf"/>
</dbReference>
<dbReference type="InterPro" id="IPR031167">
    <property type="entry name" value="G_OBG"/>
</dbReference>
<dbReference type="InterPro" id="IPR006073">
    <property type="entry name" value="GTP-bd"/>
</dbReference>
<dbReference type="InterPro" id="IPR027417">
    <property type="entry name" value="P-loop_NTPase"/>
</dbReference>
<dbReference type="InterPro" id="IPR004095">
    <property type="entry name" value="TGS"/>
</dbReference>
<dbReference type="InterPro" id="IPR012676">
    <property type="entry name" value="TGS-like"/>
</dbReference>
<dbReference type="InterPro" id="IPR023192">
    <property type="entry name" value="TGS-like_dom_sf"/>
</dbReference>
<dbReference type="InterPro" id="IPR013029">
    <property type="entry name" value="YchF_C"/>
</dbReference>
<dbReference type="InterPro" id="IPR041706">
    <property type="entry name" value="YchF_N"/>
</dbReference>
<dbReference type="NCBIfam" id="TIGR00092">
    <property type="entry name" value="redox-regulated ATPase YchF"/>
    <property type="match status" value="1"/>
</dbReference>
<dbReference type="PANTHER" id="PTHR23305">
    <property type="entry name" value="OBG GTPASE FAMILY"/>
    <property type="match status" value="1"/>
</dbReference>
<dbReference type="PANTHER" id="PTHR23305:SF18">
    <property type="entry name" value="OBG-TYPE G DOMAIN-CONTAINING PROTEIN"/>
    <property type="match status" value="1"/>
</dbReference>
<dbReference type="Pfam" id="PF01926">
    <property type="entry name" value="MMR_HSR1"/>
    <property type="match status" value="1"/>
</dbReference>
<dbReference type="Pfam" id="PF06071">
    <property type="entry name" value="YchF-GTPase_C"/>
    <property type="match status" value="1"/>
</dbReference>
<dbReference type="PIRSF" id="PIRSF006641">
    <property type="entry name" value="CHP00092"/>
    <property type="match status" value="1"/>
</dbReference>
<dbReference type="PRINTS" id="PR00326">
    <property type="entry name" value="GTP1OBG"/>
</dbReference>
<dbReference type="SUPFAM" id="SSF52540">
    <property type="entry name" value="P-loop containing nucleoside triphosphate hydrolases"/>
    <property type="match status" value="1"/>
</dbReference>
<dbReference type="SUPFAM" id="SSF81271">
    <property type="entry name" value="TGS-like"/>
    <property type="match status" value="1"/>
</dbReference>
<dbReference type="PROSITE" id="PS51710">
    <property type="entry name" value="G_OBG"/>
    <property type="match status" value="1"/>
</dbReference>
<dbReference type="PROSITE" id="PS51880">
    <property type="entry name" value="TGS"/>
    <property type="match status" value="1"/>
</dbReference>
<feature type="chain" id="PRO_0000201671" description="Ribosome-binding ATPase YchF">
    <location>
        <begin position="1"/>
        <end position="366"/>
    </location>
</feature>
<feature type="domain" description="OBG-type G">
    <location>
        <begin position="3"/>
        <end position="259"/>
    </location>
</feature>
<feature type="domain" description="TGS" evidence="3">
    <location>
        <begin position="281"/>
        <end position="364"/>
    </location>
</feature>
<feature type="binding site" evidence="2">
    <location>
        <begin position="12"/>
        <end position="17"/>
    </location>
    <ligand>
        <name>ATP</name>
        <dbReference type="ChEBI" id="CHEBI:30616"/>
    </ligand>
</feature>
<feature type="binding site" evidence="1">
    <location>
        <position position="16"/>
    </location>
    <ligand>
        <name>Mg(2+)</name>
        <dbReference type="ChEBI" id="CHEBI:18420"/>
    </ligand>
</feature>
<feature type="binding site" evidence="1">
    <location>
        <position position="36"/>
    </location>
    <ligand>
        <name>Mg(2+)</name>
        <dbReference type="ChEBI" id="CHEBI:18420"/>
    </ligand>
</feature>
<gene>
    <name evidence="2" type="primary">ychF</name>
    <name type="synonym">engD</name>
    <name type="synonym">yyaF</name>
    <name type="ordered locus">BSU40920</name>
</gene>
<name>YCHF_BACSU</name>
<proteinExistence type="evidence at transcript level"/>
<keyword id="KW-0067">ATP-binding</keyword>
<keyword id="KW-0460">Magnesium</keyword>
<keyword id="KW-0479">Metal-binding</keyword>
<keyword id="KW-0547">Nucleotide-binding</keyword>
<keyword id="KW-1185">Reference proteome</keyword>
<accession>P37518</accession>
<evidence type="ECO:0000250" key="1"/>
<evidence type="ECO:0000255" key="2">
    <source>
        <dbReference type="HAMAP-Rule" id="MF_00944"/>
    </source>
</evidence>
<evidence type="ECO:0000255" key="3">
    <source>
        <dbReference type="PROSITE-ProRule" id="PRU01228"/>
    </source>
</evidence>
<evidence type="ECO:0000269" key="4">
    <source>
    </source>
</evidence>
<evidence type="ECO:0000269" key="5">
    <source>
    </source>
</evidence>
<sequence>MALTAGIVGLPNVGKSTLFNAITQAGAESANYPFCTIDPNVGIVEVPDDRLQKLTELVNPKKTVPTAFEFTDIAGIVKGASKGEGLGNKFLSHIRQVDAICHVVRAFSDDNITHVSGKVDPIDDIETINLELILADMETVEKRITRVSKLAKQKDKDAVFEFEILSKLKEAFESEKPARSVEFTEEQQKLVKQLHLLTSKPILYVANVSEDEVADPSGNENVAKIREYAAGENAEVIVVCAKIESEIAELEGEEKQMFLEELGIQESGLDQLIKASYSLLGLATYFTAGEQEVRAWTFKKGMKAPECAGIIHSDFERGFIRAETVAYEDLLAGGGMAGAKEAGKVRLEGKEYVVQDGDVIHFRFNV</sequence>
<comment type="function">
    <text evidence="2">ATPase that binds to both the 70S ribosome and the 50S ribosomal subunit in a nucleotide-independent manner.</text>
</comment>
<comment type="cofactor">
    <cofactor evidence="1">
        <name>Mg(2+)</name>
        <dbReference type="ChEBI" id="CHEBI:18420"/>
    </cofactor>
</comment>
<comment type="induction">
    <text evidence="5">Weakly expressed during exponential growth in rich medium, stops at onset of stationary phase. In minimal medium is more strongly expressed and continues into stationary phase, part of the ychF-rpsF-ssbA-rpsR operon (PubMed:14762004).</text>
</comment>
<comment type="disruption phenotype">
    <text evidence="4">No visible phenotype.</text>
</comment>
<comment type="similarity">
    <text evidence="2">Belongs to the TRAFAC class OBG-HflX-like GTPase superfamily. OBG GTPase family. YchF/OLA1 subfamily.</text>
</comment>
<organism>
    <name type="scientific">Bacillus subtilis (strain 168)</name>
    <dbReference type="NCBI Taxonomy" id="224308"/>
    <lineage>
        <taxon>Bacteria</taxon>
        <taxon>Bacillati</taxon>
        <taxon>Bacillota</taxon>
        <taxon>Bacilli</taxon>
        <taxon>Bacillales</taxon>
        <taxon>Bacillaceae</taxon>
        <taxon>Bacillus</taxon>
    </lineage>
</organism>
<reference key="1">
    <citation type="journal article" date="1994" name="DNA Res.">
        <title>Systematic sequencing of the 180 kilobase region of the Bacillus subtilis chromosome containing the replication origin.</title>
        <authorList>
            <person name="Ogasawara N."/>
            <person name="Nakai S."/>
            <person name="Yoshikawa H."/>
        </authorList>
    </citation>
    <scope>NUCLEOTIDE SEQUENCE [GENOMIC DNA]</scope>
    <source>
        <strain>168</strain>
    </source>
</reference>
<reference key="2">
    <citation type="journal article" date="1997" name="Nature">
        <title>The complete genome sequence of the Gram-positive bacterium Bacillus subtilis.</title>
        <authorList>
            <person name="Kunst F."/>
            <person name="Ogasawara N."/>
            <person name="Moszer I."/>
            <person name="Albertini A.M."/>
            <person name="Alloni G."/>
            <person name="Azevedo V."/>
            <person name="Bertero M.G."/>
            <person name="Bessieres P."/>
            <person name="Bolotin A."/>
            <person name="Borchert S."/>
            <person name="Borriss R."/>
            <person name="Boursier L."/>
            <person name="Brans A."/>
            <person name="Braun M."/>
            <person name="Brignell S.C."/>
            <person name="Bron S."/>
            <person name="Brouillet S."/>
            <person name="Bruschi C.V."/>
            <person name="Caldwell B."/>
            <person name="Capuano V."/>
            <person name="Carter N.M."/>
            <person name="Choi S.-K."/>
            <person name="Codani J.-J."/>
            <person name="Connerton I.F."/>
            <person name="Cummings N.J."/>
            <person name="Daniel R.A."/>
            <person name="Denizot F."/>
            <person name="Devine K.M."/>
            <person name="Duesterhoeft A."/>
            <person name="Ehrlich S.D."/>
            <person name="Emmerson P.T."/>
            <person name="Entian K.-D."/>
            <person name="Errington J."/>
            <person name="Fabret C."/>
            <person name="Ferrari E."/>
            <person name="Foulger D."/>
            <person name="Fritz C."/>
            <person name="Fujita M."/>
            <person name="Fujita Y."/>
            <person name="Fuma S."/>
            <person name="Galizzi A."/>
            <person name="Galleron N."/>
            <person name="Ghim S.-Y."/>
            <person name="Glaser P."/>
            <person name="Goffeau A."/>
            <person name="Golightly E.J."/>
            <person name="Grandi G."/>
            <person name="Guiseppi G."/>
            <person name="Guy B.J."/>
            <person name="Haga K."/>
            <person name="Haiech J."/>
            <person name="Harwood C.R."/>
            <person name="Henaut A."/>
            <person name="Hilbert H."/>
            <person name="Holsappel S."/>
            <person name="Hosono S."/>
            <person name="Hullo M.-F."/>
            <person name="Itaya M."/>
            <person name="Jones L.-M."/>
            <person name="Joris B."/>
            <person name="Karamata D."/>
            <person name="Kasahara Y."/>
            <person name="Klaerr-Blanchard M."/>
            <person name="Klein C."/>
            <person name="Kobayashi Y."/>
            <person name="Koetter P."/>
            <person name="Koningstein G."/>
            <person name="Krogh S."/>
            <person name="Kumano M."/>
            <person name="Kurita K."/>
            <person name="Lapidus A."/>
            <person name="Lardinois S."/>
            <person name="Lauber J."/>
            <person name="Lazarevic V."/>
            <person name="Lee S.-M."/>
            <person name="Levine A."/>
            <person name="Liu H."/>
            <person name="Masuda S."/>
            <person name="Mauel C."/>
            <person name="Medigue C."/>
            <person name="Medina N."/>
            <person name="Mellado R.P."/>
            <person name="Mizuno M."/>
            <person name="Moestl D."/>
            <person name="Nakai S."/>
            <person name="Noback M."/>
            <person name="Noone D."/>
            <person name="O'Reilly M."/>
            <person name="Ogawa K."/>
            <person name="Ogiwara A."/>
            <person name="Oudega B."/>
            <person name="Park S.-H."/>
            <person name="Parro V."/>
            <person name="Pohl T.M."/>
            <person name="Portetelle D."/>
            <person name="Porwollik S."/>
            <person name="Prescott A.M."/>
            <person name="Presecan E."/>
            <person name="Pujic P."/>
            <person name="Purnelle B."/>
            <person name="Rapoport G."/>
            <person name="Rey M."/>
            <person name="Reynolds S."/>
            <person name="Rieger M."/>
            <person name="Rivolta C."/>
            <person name="Rocha E."/>
            <person name="Roche B."/>
            <person name="Rose M."/>
            <person name="Sadaie Y."/>
            <person name="Sato T."/>
            <person name="Scanlan E."/>
            <person name="Schleich S."/>
            <person name="Schroeter R."/>
            <person name="Scoffone F."/>
            <person name="Sekiguchi J."/>
            <person name="Sekowska A."/>
            <person name="Seror S.J."/>
            <person name="Serror P."/>
            <person name="Shin B.-S."/>
            <person name="Soldo B."/>
            <person name="Sorokin A."/>
            <person name="Tacconi E."/>
            <person name="Takagi T."/>
            <person name="Takahashi H."/>
            <person name="Takemaru K."/>
            <person name="Takeuchi M."/>
            <person name="Tamakoshi A."/>
            <person name="Tanaka T."/>
            <person name="Terpstra P."/>
            <person name="Tognoni A."/>
            <person name="Tosato V."/>
            <person name="Uchiyama S."/>
            <person name="Vandenbol M."/>
            <person name="Vannier F."/>
            <person name="Vassarotti A."/>
            <person name="Viari A."/>
            <person name="Wambutt R."/>
            <person name="Wedler E."/>
            <person name="Wedler H."/>
            <person name="Weitzenegger T."/>
            <person name="Winters P."/>
            <person name="Wipat A."/>
            <person name="Yamamoto H."/>
            <person name="Yamane K."/>
            <person name="Yasumoto K."/>
            <person name="Yata K."/>
            <person name="Yoshida K."/>
            <person name="Yoshikawa H.-F."/>
            <person name="Zumstein E."/>
            <person name="Yoshikawa H."/>
            <person name="Danchin A."/>
        </authorList>
    </citation>
    <scope>NUCLEOTIDE SEQUENCE [LARGE SCALE GENOMIC DNA]</scope>
    <source>
        <strain>168</strain>
    </source>
</reference>
<reference key="3">
    <citation type="journal article" date="2002" name="Microbiology">
        <title>Six GTP-binding proteins of the Era/Obg family are essential for cell growth in Bacillus subtilis.</title>
        <authorList>
            <person name="Morimoto T."/>
            <person name="Loh P.C."/>
            <person name="Hirai T."/>
            <person name="Asai K."/>
            <person name="Kobayashi K."/>
            <person name="Moriya S."/>
            <person name="Ogasawara N."/>
        </authorList>
    </citation>
    <scope>DISRUPTION PHENOTYPE</scope>
    <source>
        <strain>CRK6000</strain>
    </source>
</reference>
<reference key="4">
    <citation type="journal article" date="2004" name="J. Bacteriol.">
        <title>Differential expression of two paralogous genes of Bacillus subtilis encoding single-stranded DNA binding protein.</title>
        <authorList>
            <person name="Lindner C."/>
            <person name="Nijland R."/>
            <person name="van Hartskamp M."/>
            <person name="Bron S."/>
            <person name="Hamoen L.W."/>
            <person name="Kuipers O.P."/>
        </authorList>
    </citation>
    <scope>INDUCTION</scope>
    <source>
        <strain>168</strain>
    </source>
</reference>
<protein>
    <recommendedName>
        <fullName evidence="2">Ribosome-binding ATPase YchF</fullName>
    </recommendedName>
</protein>